<dbReference type="EC" id="2.1.1.163" evidence="1"/>
<dbReference type="EMBL" id="CR626927">
    <property type="protein sequence ID" value="CAH06582.1"/>
    <property type="molecule type" value="Genomic_DNA"/>
</dbReference>
<dbReference type="SMR" id="Q5LH04"/>
<dbReference type="PaxDb" id="272559-BF9343_0801"/>
<dbReference type="DNASU" id="3288134"/>
<dbReference type="KEGG" id="bfs:BF9343_0801"/>
<dbReference type="eggNOG" id="COG2226">
    <property type="taxonomic scope" value="Bacteria"/>
</dbReference>
<dbReference type="HOGENOM" id="CLU_037990_0_0_10"/>
<dbReference type="UniPathway" id="UPA00079">
    <property type="reaction ID" value="UER00169"/>
</dbReference>
<dbReference type="Proteomes" id="UP000006731">
    <property type="component" value="Chromosome"/>
</dbReference>
<dbReference type="GO" id="GO:0043770">
    <property type="term" value="F:demethylmenaquinone methyltransferase activity"/>
    <property type="evidence" value="ECO:0007669"/>
    <property type="project" value="UniProtKB-UniRule"/>
</dbReference>
<dbReference type="GO" id="GO:0009234">
    <property type="term" value="P:menaquinone biosynthetic process"/>
    <property type="evidence" value="ECO:0007669"/>
    <property type="project" value="UniProtKB-UniRule"/>
</dbReference>
<dbReference type="GO" id="GO:0032259">
    <property type="term" value="P:methylation"/>
    <property type="evidence" value="ECO:0007669"/>
    <property type="project" value="UniProtKB-KW"/>
</dbReference>
<dbReference type="CDD" id="cd02440">
    <property type="entry name" value="AdoMet_MTases"/>
    <property type="match status" value="1"/>
</dbReference>
<dbReference type="Gene3D" id="3.40.50.150">
    <property type="entry name" value="Vaccinia Virus protein VP39"/>
    <property type="match status" value="1"/>
</dbReference>
<dbReference type="HAMAP" id="MF_01813">
    <property type="entry name" value="MenG_UbiE_methyltr"/>
    <property type="match status" value="1"/>
</dbReference>
<dbReference type="InterPro" id="IPR029063">
    <property type="entry name" value="SAM-dependent_MTases_sf"/>
</dbReference>
<dbReference type="InterPro" id="IPR004033">
    <property type="entry name" value="UbiE/COQ5_MeTrFase"/>
</dbReference>
<dbReference type="InterPro" id="IPR023576">
    <property type="entry name" value="UbiE/COQ5_MeTrFase_CS"/>
</dbReference>
<dbReference type="NCBIfam" id="TIGR01934">
    <property type="entry name" value="MenG_MenH_UbiE"/>
    <property type="match status" value="1"/>
</dbReference>
<dbReference type="NCBIfam" id="NF001244">
    <property type="entry name" value="PRK00216.1-5"/>
    <property type="match status" value="1"/>
</dbReference>
<dbReference type="PANTHER" id="PTHR43591:SF24">
    <property type="entry name" value="2-METHOXY-6-POLYPRENYL-1,4-BENZOQUINOL METHYLASE, MITOCHONDRIAL"/>
    <property type="match status" value="1"/>
</dbReference>
<dbReference type="PANTHER" id="PTHR43591">
    <property type="entry name" value="METHYLTRANSFERASE"/>
    <property type="match status" value="1"/>
</dbReference>
<dbReference type="Pfam" id="PF01209">
    <property type="entry name" value="Ubie_methyltran"/>
    <property type="match status" value="1"/>
</dbReference>
<dbReference type="SUPFAM" id="SSF53335">
    <property type="entry name" value="S-adenosyl-L-methionine-dependent methyltransferases"/>
    <property type="match status" value="1"/>
</dbReference>
<dbReference type="PROSITE" id="PS51608">
    <property type="entry name" value="SAM_MT_UBIE"/>
    <property type="match status" value="1"/>
</dbReference>
<dbReference type="PROSITE" id="PS01183">
    <property type="entry name" value="UBIE_1"/>
    <property type="match status" value="1"/>
</dbReference>
<gene>
    <name evidence="1" type="primary">menG</name>
    <name type="ordered locus">BF0839</name>
</gene>
<protein>
    <recommendedName>
        <fullName evidence="1">Demethylmenaquinone methyltransferase</fullName>
        <ecNumber evidence="1">2.1.1.163</ecNumber>
    </recommendedName>
</protein>
<evidence type="ECO:0000255" key="1">
    <source>
        <dbReference type="HAMAP-Rule" id="MF_01813"/>
    </source>
</evidence>
<sequence length="245" mass="27868">MNYPQEKIKPYSNDGKKSEQVEQMFDNIAPAYDQLNHTLSLGIDRSWRRKAINWLKPFRPQQIMDVATGTGDFAILACHELQPEQLIGTDISEGMMNVGREKVKKEGLSEKISFAREDCTSLSFADNRFDAITVAFGIRNFEDLDKGLSEMYRVLKTGGHLVILELTTPDRFPMKQMFTIYSKIVIPTLGKLLSKDNSAYSYLPQTIKAFPQGEVMKNVISRVGFSQVQFRRLTFGICTLYTATK</sequence>
<keyword id="KW-0474">Menaquinone biosynthesis</keyword>
<keyword id="KW-0489">Methyltransferase</keyword>
<keyword id="KW-0949">S-adenosyl-L-methionine</keyword>
<keyword id="KW-0808">Transferase</keyword>
<comment type="function">
    <text evidence="1">Methyltransferase required for the conversion of demethylmenaquinol (DMKH2) to menaquinol (MKH2).</text>
</comment>
<comment type="catalytic activity">
    <reaction evidence="1">
        <text>a 2-demethylmenaquinol + S-adenosyl-L-methionine = a menaquinol + S-adenosyl-L-homocysteine + H(+)</text>
        <dbReference type="Rhea" id="RHEA:42640"/>
        <dbReference type="Rhea" id="RHEA-COMP:9539"/>
        <dbReference type="Rhea" id="RHEA-COMP:9563"/>
        <dbReference type="ChEBI" id="CHEBI:15378"/>
        <dbReference type="ChEBI" id="CHEBI:18151"/>
        <dbReference type="ChEBI" id="CHEBI:55437"/>
        <dbReference type="ChEBI" id="CHEBI:57856"/>
        <dbReference type="ChEBI" id="CHEBI:59789"/>
        <dbReference type="EC" id="2.1.1.163"/>
    </reaction>
</comment>
<comment type="pathway">
    <text evidence="1">Quinol/quinone metabolism; menaquinone biosynthesis; menaquinol from 1,4-dihydroxy-2-naphthoate: step 2/2.</text>
</comment>
<comment type="similarity">
    <text evidence="1">Belongs to the class I-like SAM-binding methyltransferase superfamily. MenG/UbiE family.</text>
</comment>
<feature type="chain" id="PRO_1000056217" description="Demethylmenaquinone methyltransferase">
    <location>
        <begin position="1"/>
        <end position="245"/>
    </location>
</feature>
<feature type="binding site" evidence="1">
    <location>
        <position position="70"/>
    </location>
    <ligand>
        <name>S-adenosyl-L-methionine</name>
        <dbReference type="ChEBI" id="CHEBI:59789"/>
    </ligand>
</feature>
<feature type="binding site" evidence="1">
    <location>
        <position position="90"/>
    </location>
    <ligand>
        <name>S-adenosyl-L-methionine</name>
        <dbReference type="ChEBI" id="CHEBI:59789"/>
    </ligand>
</feature>
<feature type="binding site" evidence="1">
    <location>
        <begin position="118"/>
        <end position="119"/>
    </location>
    <ligand>
        <name>S-adenosyl-L-methionine</name>
        <dbReference type="ChEBI" id="CHEBI:59789"/>
    </ligand>
</feature>
<name>MENG_BACFN</name>
<organism>
    <name type="scientific">Bacteroides fragilis (strain ATCC 25285 / DSM 2151 / CCUG 4856 / JCM 11019 / LMG 10263 / NCTC 9343 / Onslow / VPI 2553 / EN-2)</name>
    <dbReference type="NCBI Taxonomy" id="272559"/>
    <lineage>
        <taxon>Bacteria</taxon>
        <taxon>Pseudomonadati</taxon>
        <taxon>Bacteroidota</taxon>
        <taxon>Bacteroidia</taxon>
        <taxon>Bacteroidales</taxon>
        <taxon>Bacteroidaceae</taxon>
        <taxon>Bacteroides</taxon>
    </lineage>
</organism>
<reference key="1">
    <citation type="journal article" date="2005" name="Science">
        <title>Extensive DNA inversions in the B. fragilis genome control variable gene expression.</title>
        <authorList>
            <person name="Cerdeno-Tarraga A.-M."/>
            <person name="Patrick S."/>
            <person name="Crossman L.C."/>
            <person name="Blakely G."/>
            <person name="Abratt V."/>
            <person name="Lennard N."/>
            <person name="Poxton I."/>
            <person name="Duerden B."/>
            <person name="Harris B."/>
            <person name="Quail M.A."/>
            <person name="Barron A."/>
            <person name="Clark L."/>
            <person name="Corton C."/>
            <person name="Doggett J."/>
            <person name="Holden M.T.G."/>
            <person name="Larke N."/>
            <person name="Line A."/>
            <person name="Lord A."/>
            <person name="Norbertczak H."/>
            <person name="Ormond D."/>
            <person name="Price C."/>
            <person name="Rabbinowitsch E."/>
            <person name="Woodward J."/>
            <person name="Barrell B.G."/>
            <person name="Parkhill J."/>
        </authorList>
    </citation>
    <scope>NUCLEOTIDE SEQUENCE [LARGE SCALE GENOMIC DNA]</scope>
    <source>
        <strain>ATCC 25285 / DSM 2151 / CCUG 4856 / JCM 11019 / LMG 10263 / NCTC 9343 / Onslow / VPI 2553 / EN-2</strain>
    </source>
</reference>
<proteinExistence type="inferred from homology"/>
<accession>Q5LH04</accession>